<evidence type="ECO:0000255" key="1">
    <source>
        <dbReference type="HAMAP-Rule" id="MF_01642"/>
    </source>
</evidence>
<accession>A6L7E4</accession>
<reference key="1">
    <citation type="journal article" date="2007" name="PLoS Biol.">
        <title>Evolution of symbiotic bacteria in the distal human intestine.</title>
        <authorList>
            <person name="Xu J."/>
            <person name="Mahowald M.A."/>
            <person name="Ley R.E."/>
            <person name="Lozupone C.A."/>
            <person name="Hamady M."/>
            <person name="Martens E.C."/>
            <person name="Henrissat B."/>
            <person name="Coutinho P.M."/>
            <person name="Minx P."/>
            <person name="Latreille P."/>
            <person name="Cordum H."/>
            <person name="Van Brunt A."/>
            <person name="Kim K."/>
            <person name="Fulton R.S."/>
            <person name="Fulton L.A."/>
            <person name="Clifton S.W."/>
            <person name="Wilson R.K."/>
            <person name="Knight R.D."/>
            <person name="Gordon J.I."/>
        </authorList>
    </citation>
    <scope>NUCLEOTIDE SEQUENCE [LARGE SCALE GENOMIC DNA]</scope>
    <source>
        <strain>ATCC 8482 / DSM 1447 / JCM 5826 / CCUG 4940 / NBRC 14291 / NCTC 11154</strain>
    </source>
</reference>
<protein>
    <recommendedName>
        <fullName evidence="1">LL-diaminopimelate aminotransferase</fullName>
        <shortName evidence="1">DAP-AT</shortName>
        <shortName evidence="1">DAP-aminotransferase</shortName>
        <shortName evidence="1">LL-DAP-aminotransferase</shortName>
        <ecNumber evidence="1">2.6.1.83</ecNumber>
    </recommendedName>
</protein>
<gene>
    <name evidence="1" type="primary">dapL</name>
    <name type="ordered locus">BVU_4005</name>
</gene>
<name>DAPAT_PHOV8</name>
<organism>
    <name type="scientific">Phocaeicola vulgatus (strain ATCC 8482 / DSM 1447 / JCM 5826 / CCUG 4940 / NBRC 14291 / NCTC 11154)</name>
    <name type="common">Bacteroides vulgatus</name>
    <dbReference type="NCBI Taxonomy" id="435590"/>
    <lineage>
        <taxon>Bacteria</taxon>
        <taxon>Pseudomonadati</taxon>
        <taxon>Bacteroidota</taxon>
        <taxon>Bacteroidia</taxon>
        <taxon>Bacteroidales</taxon>
        <taxon>Bacteroidaceae</taxon>
        <taxon>Phocaeicola</taxon>
    </lineage>
</organism>
<dbReference type="EC" id="2.6.1.83" evidence="1"/>
<dbReference type="EMBL" id="CP000139">
    <property type="protein sequence ID" value="ABR41608.1"/>
    <property type="molecule type" value="Genomic_DNA"/>
</dbReference>
<dbReference type="RefSeq" id="WP_012055981.1">
    <property type="nucleotide sequence ID" value="NC_009614.1"/>
</dbReference>
<dbReference type="SMR" id="A6L7E4"/>
<dbReference type="STRING" id="435590.BVU_4005"/>
<dbReference type="PaxDb" id="435590-BVU_4005"/>
<dbReference type="GeneID" id="5304964"/>
<dbReference type="KEGG" id="bvu:BVU_4005"/>
<dbReference type="PATRIC" id="fig|435590.9.peg.4114"/>
<dbReference type="eggNOG" id="COG0436">
    <property type="taxonomic scope" value="Bacteria"/>
</dbReference>
<dbReference type="HOGENOM" id="CLU_051433_0_0_10"/>
<dbReference type="BioCyc" id="BVUL435590:G1G59-4142-MONOMER"/>
<dbReference type="UniPathway" id="UPA00034">
    <property type="reaction ID" value="UER00466"/>
</dbReference>
<dbReference type="Proteomes" id="UP000002861">
    <property type="component" value="Chromosome"/>
</dbReference>
<dbReference type="GO" id="GO:0010285">
    <property type="term" value="F:L,L-diaminopimelate aminotransferase activity"/>
    <property type="evidence" value="ECO:0007669"/>
    <property type="project" value="UniProtKB-UniRule"/>
</dbReference>
<dbReference type="GO" id="GO:0030170">
    <property type="term" value="F:pyridoxal phosphate binding"/>
    <property type="evidence" value="ECO:0007669"/>
    <property type="project" value="UniProtKB-UniRule"/>
</dbReference>
<dbReference type="GO" id="GO:0033362">
    <property type="term" value="P:lysine biosynthetic process via diaminopimelate, diaminopimelate-aminotransferase pathway"/>
    <property type="evidence" value="ECO:0007669"/>
    <property type="project" value="UniProtKB-UniRule"/>
</dbReference>
<dbReference type="CDD" id="cd00609">
    <property type="entry name" value="AAT_like"/>
    <property type="match status" value="1"/>
</dbReference>
<dbReference type="FunFam" id="3.40.640.10:FF:000099">
    <property type="entry name" value="LL-diaminopimelate aminotransferase, chloroplastic"/>
    <property type="match status" value="1"/>
</dbReference>
<dbReference type="Gene3D" id="3.90.1150.10">
    <property type="entry name" value="Aspartate Aminotransferase, domain 1"/>
    <property type="match status" value="1"/>
</dbReference>
<dbReference type="Gene3D" id="3.40.640.10">
    <property type="entry name" value="Type I PLP-dependent aspartate aminotransferase-like (Major domain)"/>
    <property type="match status" value="1"/>
</dbReference>
<dbReference type="HAMAP" id="MF_01642">
    <property type="entry name" value="DapL_aminotrans_1"/>
    <property type="match status" value="1"/>
</dbReference>
<dbReference type="InterPro" id="IPR004839">
    <property type="entry name" value="Aminotransferase_I/II_large"/>
</dbReference>
<dbReference type="InterPro" id="IPR019942">
    <property type="entry name" value="DapL/ALD1"/>
</dbReference>
<dbReference type="InterPro" id="IPR015424">
    <property type="entry name" value="PyrdxlP-dep_Trfase"/>
</dbReference>
<dbReference type="InterPro" id="IPR015421">
    <property type="entry name" value="PyrdxlP-dep_Trfase_major"/>
</dbReference>
<dbReference type="InterPro" id="IPR015422">
    <property type="entry name" value="PyrdxlP-dep_Trfase_small"/>
</dbReference>
<dbReference type="NCBIfam" id="TIGR03542">
    <property type="entry name" value="DAPAT_plant"/>
    <property type="match status" value="1"/>
</dbReference>
<dbReference type="PANTHER" id="PTHR43144">
    <property type="entry name" value="AMINOTRANSFERASE"/>
    <property type="match status" value="1"/>
</dbReference>
<dbReference type="Pfam" id="PF00155">
    <property type="entry name" value="Aminotran_1_2"/>
    <property type="match status" value="1"/>
</dbReference>
<dbReference type="SUPFAM" id="SSF53383">
    <property type="entry name" value="PLP-dependent transferases"/>
    <property type="match status" value="1"/>
</dbReference>
<feature type="chain" id="PRO_0000342216" description="LL-diaminopimelate aminotransferase">
    <location>
        <begin position="1"/>
        <end position="409"/>
    </location>
</feature>
<feature type="binding site" evidence="1">
    <location>
        <position position="15"/>
    </location>
    <ligand>
        <name>substrate</name>
    </ligand>
</feature>
<feature type="binding site" evidence="1">
    <location>
        <position position="42"/>
    </location>
    <ligand>
        <name>substrate</name>
    </ligand>
</feature>
<feature type="binding site" evidence="1">
    <location>
        <position position="72"/>
    </location>
    <ligand>
        <name>pyridoxal 5'-phosphate</name>
        <dbReference type="ChEBI" id="CHEBI:597326"/>
    </ligand>
</feature>
<feature type="binding site" evidence="1">
    <location>
        <begin position="108"/>
        <end position="109"/>
    </location>
    <ligand>
        <name>pyridoxal 5'-phosphate</name>
        <dbReference type="ChEBI" id="CHEBI:597326"/>
    </ligand>
</feature>
<feature type="binding site" evidence="1">
    <location>
        <position position="109"/>
    </location>
    <ligand>
        <name>substrate</name>
    </ligand>
</feature>
<feature type="binding site" evidence="1">
    <location>
        <position position="132"/>
    </location>
    <ligand>
        <name>pyridoxal 5'-phosphate</name>
        <dbReference type="ChEBI" id="CHEBI:597326"/>
    </ligand>
</feature>
<feature type="binding site" evidence="1">
    <location>
        <position position="132"/>
    </location>
    <ligand>
        <name>substrate</name>
    </ligand>
</feature>
<feature type="binding site" evidence="1">
    <location>
        <position position="186"/>
    </location>
    <ligand>
        <name>pyridoxal 5'-phosphate</name>
        <dbReference type="ChEBI" id="CHEBI:597326"/>
    </ligand>
</feature>
<feature type="binding site" evidence="1">
    <location>
        <position position="186"/>
    </location>
    <ligand>
        <name>substrate</name>
    </ligand>
</feature>
<feature type="binding site" evidence="1">
    <location>
        <position position="217"/>
    </location>
    <ligand>
        <name>pyridoxal 5'-phosphate</name>
        <dbReference type="ChEBI" id="CHEBI:597326"/>
    </ligand>
</feature>
<feature type="binding site" evidence="1">
    <location>
        <begin position="245"/>
        <end position="247"/>
    </location>
    <ligand>
        <name>pyridoxal 5'-phosphate</name>
        <dbReference type="ChEBI" id="CHEBI:597326"/>
    </ligand>
</feature>
<feature type="binding site" evidence="1">
    <location>
        <position position="256"/>
    </location>
    <ligand>
        <name>pyridoxal 5'-phosphate</name>
        <dbReference type="ChEBI" id="CHEBI:597326"/>
    </ligand>
</feature>
<feature type="binding site" evidence="1">
    <location>
        <position position="291"/>
    </location>
    <ligand>
        <name>pyridoxal 5'-phosphate</name>
        <dbReference type="ChEBI" id="CHEBI:597326"/>
    </ligand>
</feature>
<feature type="binding site" evidence="1">
    <location>
        <position position="291"/>
    </location>
    <ligand>
        <name>substrate</name>
    </ligand>
</feature>
<feature type="binding site" evidence="1">
    <location>
        <position position="387"/>
    </location>
    <ligand>
        <name>substrate</name>
    </ligand>
</feature>
<feature type="modified residue" description="N6-(pyridoxal phosphate)lysine" evidence="1">
    <location>
        <position position="248"/>
    </location>
</feature>
<sequence>MALVNEHFLKLPNNYLFSDIAKKVNAFKVSHPKTDLIRLGIGDVTRPLPQTSIEAMYKAVDELANKETFHGYGPEQGYDFLIDAVIRNDYAPRGVYLEPGEVFISDGAKSDTGNIGDILRHDNSIGVTDPIYPVYIDSNVMCGRAGILEDGRWSNVVYLPCLSENNFVPEIPDRRIDILYLCYPNNPTGTVISKAELKKWVNYALENDTLILYDAAYEAYIQDPDIPHSIYEIKGAKKVAIEFRSFSKTAGFTGVRCGYTVVPKELTAATLEGERIPLNRMWNRRQCTKFNGTSYITQRGAEAIYTPEGKKQVKAIIQYYMANARIMKEALESTGLKVFGGENAPYLWVKAPGEVSSWKFFEQMLYEANVVGTPGVGFGPSGEGYIRLTAFGERADCEEAMKRIRKWLL</sequence>
<comment type="function">
    <text evidence="1">Involved in the synthesis of meso-diaminopimelate (m-DAP or DL-DAP), required for both lysine and peptidoglycan biosynthesis. Catalyzes the direct conversion of tetrahydrodipicolinate to LL-diaminopimelate.</text>
</comment>
<comment type="catalytic activity">
    <reaction evidence="1">
        <text>(2S,6S)-2,6-diaminopimelate + 2-oxoglutarate = (S)-2,3,4,5-tetrahydrodipicolinate + L-glutamate + H2O + H(+)</text>
        <dbReference type="Rhea" id="RHEA:23988"/>
        <dbReference type="ChEBI" id="CHEBI:15377"/>
        <dbReference type="ChEBI" id="CHEBI:15378"/>
        <dbReference type="ChEBI" id="CHEBI:16810"/>
        <dbReference type="ChEBI" id="CHEBI:16845"/>
        <dbReference type="ChEBI" id="CHEBI:29985"/>
        <dbReference type="ChEBI" id="CHEBI:57609"/>
        <dbReference type="EC" id="2.6.1.83"/>
    </reaction>
</comment>
<comment type="cofactor">
    <cofactor evidence="1">
        <name>pyridoxal 5'-phosphate</name>
        <dbReference type="ChEBI" id="CHEBI:597326"/>
    </cofactor>
</comment>
<comment type="pathway">
    <text evidence="1">Amino-acid biosynthesis; L-lysine biosynthesis via DAP pathway; LL-2,6-diaminopimelate from (S)-tetrahydrodipicolinate (aminotransferase route): step 1/1.</text>
</comment>
<comment type="subunit">
    <text evidence="1">Homodimer.</text>
</comment>
<comment type="similarity">
    <text evidence="1">Belongs to the class-I pyridoxal-phosphate-dependent aminotransferase family. LL-diaminopimelate aminotransferase subfamily.</text>
</comment>
<keyword id="KW-0032">Aminotransferase</keyword>
<keyword id="KW-0663">Pyridoxal phosphate</keyword>
<keyword id="KW-0808">Transferase</keyword>
<proteinExistence type="inferred from homology"/>